<keyword id="KW-0687">Ribonucleoprotein</keyword>
<keyword id="KW-0689">Ribosomal protein</keyword>
<keyword id="KW-0694">RNA-binding</keyword>
<keyword id="KW-0699">rRNA-binding</keyword>
<dbReference type="EMBL" id="CP000472">
    <property type="protein sequence ID" value="ACJ28790.1"/>
    <property type="molecule type" value="Genomic_DNA"/>
</dbReference>
<dbReference type="RefSeq" id="WP_012153476.1">
    <property type="nucleotide sequence ID" value="NC_011566.1"/>
</dbReference>
<dbReference type="SMR" id="B8CNF6"/>
<dbReference type="STRING" id="225849.swp_2034"/>
<dbReference type="KEGG" id="swp:swp_2034"/>
<dbReference type="eggNOG" id="COG0100">
    <property type="taxonomic scope" value="Bacteria"/>
</dbReference>
<dbReference type="HOGENOM" id="CLU_072439_5_0_6"/>
<dbReference type="OrthoDB" id="9806415at2"/>
<dbReference type="Proteomes" id="UP000000753">
    <property type="component" value="Chromosome"/>
</dbReference>
<dbReference type="GO" id="GO:1990904">
    <property type="term" value="C:ribonucleoprotein complex"/>
    <property type="evidence" value="ECO:0007669"/>
    <property type="project" value="UniProtKB-KW"/>
</dbReference>
<dbReference type="GO" id="GO:0005840">
    <property type="term" value="C:ribosome"/>
    <property type="evidence" value="ECO:0007669"/>
    <property type="project" value="UniProtKB-KW"/>
</dbReference>
<dbReference type="GO" id="GO:0019843">
    <property type="term" value="F:rRNA binding"/>
    <property type="evidence" value="ECO:0007669"/>
    <property type="project" value="UniProtKB-UniRule"/>
</dbReference>
<dbReference type="GO" id="GO:0003735">
    <property type="term" value="F:structural constituent of ribosome"/>
    <property type="evidence" value="ECO:0007669"/>
    <property type="project" value="InterPro"/>
</dbReference>
<dbReference type="GO" id="GO:0006412">
    <property type="term" value="P:translation"/>
    <property type="evidence" value="ECO:0007669"/>
    <property type="project" value="UniProtKB-UniRule"/>
</dbReference>
<dbReference type="FunFam" id="3.30.420.80:FF:000001">
    <property type="entry name" value="30S ribosomal protein S11"/>
    <property type="match status" value="1"/>
</dbReference>
<dbReference type="Gene3D" id="3.30.420.80">
    <property type="entry name" value="Ribosomal protein S11"/>
    <property type="match status" value="1"/>
</dbReference>
<dbReference type="HAMAP" id="MF_01310">
    <property type="entry name" value="Ribosomal_uS11"/>
    <property type="match status" value="1"/>
</dbReference>
<dbReference type="InterPro" id="IPR001971">
    <property type="entry name" value="Ribosomal_uS11"/>
</dbReference>
<dbReference type="InterPro" id="IPR019981">
    <property type="entry name" value="Ribosomal_uS11_bac-type"/>
</dbReference>
<dbReference type="InterPro" id="IPR018102">
    <property type="entry name" value="Ribosomal_uS11_CS"/>
</dbReference>
<dbReference type="InterPro" id="IPR036967">
    <property type="entry name" value="Ribosomal_uS11_sf"/>
</dbReference>
<dbReference type="NCBIfam" id="NF003698">
    <property type="entry name" value="PRK05309.1"/>
    <property type="match status" value="1"/>
</dbReference>
<dbReference type="NCBIfam" id="TIGR03632">
    <property type="entry name" value="uS11_bact"/>
    <property type="match status" value="1"/>
</dbReference>
<dbReference type="PANTHER" id="PTHR11759">
    <property type="entry name" value="40S RIBOSOMAL PROTEIN S14/30S RIBOSOMAL PROTEIN S11"/>
    <property type="match status" value="1"/>
</dbReference>
<dbReference type="Pfam" id="PF00411">
    <property type="entry name" value="Ribosomal_S11"/>
    <property type="match status" value="1"/>
</dbReference>
<dbReference type="PIRSF" id="PIRSF002131">
    <property type="entry name" value="Ribosomal_S11"/>
    <property type="match status" value="1"/>
</dbReference>
<dbReference type="SUPFAM" id="SSF53137">
    <property type="entry name" value="Translational machinery components"/>
    <property type="match status" value="1"/>
</dbReference>
<dbReference type="PROSITE" id="PS00054">
    <property type="entry name" value="RIBOSOMAL_S11"/>
    <property type="match status" value="1"/>
</dbReference>
<protein>
    <recommendedName>
        <fullName evidence="1">Small ribosomal subunit protein uS11</fullName>
    </recommendedName>
    <alternativeName>
        <fullName evidence="2">30S ribosomal protein S11</fullName>
    </alternativeName>
</protein>
<feature type="chain" id="PRO_1000141139" description="Small ribosomal subunit protein uS11">
    <location>
        <begin position="1"/>
        <end position="130"/>
    </location>
</feature>
<comment type="function">
    <text evidence="1">Located on the platform of the 30S subunit, it bridges several disparate RNA helices of the 16S rRNA. Forms part of the Shine-Dalgarno cleft in the 70S ribosome.</text>
</comment>
<comment type="subunit">
    <text evidence="1">Part of the 30S ribosomal subunit. Interacts with proteins S7 and S18. Binds to IF-3.</text>
</comment>
<comment type="similarity">
    <text evidence="1">Belongs to the universal ribosomal protein uS11 family.</text>
</comment>
<evidence type="ECO:0000255" key="1">
    <source>
        <dbReference type="HAMAP-Rule" id="MF_01310"/>
    </source>
</evidence>
<evidence type="ECO:0000305" key="2"/>
<accession>B8CNF6</accession>
<organism>
    <name type="scientific">Shewanella piezotolerans (strain WP3 / JCM 13877)</name>
    <dbReference type="NCBI Taxonomy" id="225849"/>
    <lineage>
        <taxon>Bacteria</taxon>
        <taxon>Pseudomonadati</taxon>
        <taxon>Pseudomonadota</taxon>
        <taxon>Gammaproteobacteria</taxon>
        <taxon>Alteromonadales</taxon>
        <taxon>Shewanellaceae</taxon>
        <taxon>Shewanella</taxon>
    </lineage>
</organism>
<proteinExistence type="inferred from homology"/>
<reference key="1">
    <citation type="journal article" date="2008" name="PLoS ONE">
        <title>Environmental adaptation: genomic analysis of the piezotolerant and psychrotolerant deep-sea iron reducing bacterium Shewanella piezotolerans WP3.</title>
        <authorList>
            <person name="Wang F."/>
            <person name="Wang J."/>
            <person name="Jian H."/>
            <person name="Zhang B."/>
            <person name="Li S."/>
            <person name="Wang F."/>
            <person name="Zeng X."/>
            <person name="Gao L."/>
            <person name="Bartlett D.H."/>
            <person name="Yu J."/>
            <person name="Hu S."/>
            <person name="Xiao X."/>
        </authorList>
    </citation>
    <scope>NUCLEOTIDE SEQUENCE [LARGE SCALE GENOMIC DNA]</scope>
    <source>
        <strain>WP3 / JCM 13877</strain>
    </source>
</reference>
<gene>
    <name evidence="1" type="primary">rpsK</name>
    <name type="ordered locus">swp_2034</name>
</gene>
<sequence length="130" mass="13938">MAKVPSRSPRKRVRKQVADGMAHIHASFNNTIITITDRQGNALSWATSGGSGFRGSRKSTPFAAQVAAERAGTAAQDYGVKNLEVFVKGPGPGRESAIRALNSVGYKITNITDVTPIPHNGCRPPKKRRV</sequence>
<name>RS11_SHEPW</name>